<protein>
    <recommendedName>
        <fullName evidence="1">Small ribosomal subunit protein uS14A</fullName>
    </recommendedName>
    <alternativeName>
        <fullName evidence="3">30S ribosomal protein S14</fullName>
    </alternativeName>
</protein>
<evidence type="ECO:0000255" key="1">
    <source>
        <dbReference type="HAMAP-Rule" id="MF_00537"/>
    </source>
</evidence>
<evidence type="ECO:0000256" key="2">
    <source>
        <dbReference type="SAM" id="MobiDB-lite"/>
    </source>
</evidence>
<evidence type="ECO:0000305" key="3"/>
<keyword id="KW-1185">Reference proteome</keyword>
<keyword id="KW-0687">Ribonucleoprotein</keyword>
<keyword id="KW-0689">Ribosomal protein</keyword>
<keyword id="KW-0694">RNA-binding</keyword>
<keyword id="KW-0699">rRNA-binding</keyword>
<proteinExistence type="inferred from homology"/>
<feature type="chain" id="PRO_0000269074" description="Small ribosomal subunit protein uS14A">
    <location>
        <begin position="1"/>
        <end position="101"/>
    </location>
</feature>
<feature type="region of interest" description="Disordered" evidence="2">
    <location>
        <begin position="1"/>
        <end position="20"/>
    </location>
</feature>
<feature type="region of interest" description="Disordered" evidence="2">
    <location>
        <begin position="28"/>
        <end position="72"/>
    </location>
</feature>
<feature type="compositionally biased region" description="Basic and acidic residues" evidence="2">
    <location>
        <begin position="38"/>
        <end position="53"/>
    </location>
</feature>
<feature type="compositionally biased region" description="Basic and acidic residues" evidence="2">
    <location>
        <begin position="61"/>
        <end position="70"/>
    </location>
</feature>
<comment type="function">
    <text evidence="1">Binds 16S rRNA, required for the assembly of 30S particles and may also be responsible for determining the conformation of the 16S rRNA at the A site.</text>
</comment>
<comment type="subunit">
    <text evidence="1">Part of the 30S ribosomal subunit. Contacts proteins S3 and S10.</text>
</comment>
<comment type="similarity">
    <text evidence="1">Belongs to the universal ribosomal protein uS14 family.</text>
</comment>
<organism>
    <name type="scientific">Streptomyces avermitilis (strain ATCC 31267 / DSM 46492 / JCM 5070 / NBRC 14893 / NCIMB 12804 / NRRL 8165 / MA-4680)</name>
    <dbReference type="NCBI Taxonomy" id="227882"/>
    <lineage>
        <taxon>Bacteria</taxon>
        <taxon>Bacillati</taxon>
        <taxon>Actinomycetota</taxon>
        <taxon>Actinomycetes</taxon>
        <taxon>Kitasatosporales</taxon>
        <taxon>Streptomycetaceae</taxon>
        <taxon>Streptomyces</taxon>
    </lineage>
</organism>
<name>RS14_STRAW</name>
<gene>
    <name evidence="1" type="primary">rpsN</name>
    <name type="synonym">rpsN2</name>
    <name type="ordered locus">SAV_4641</name>
</gene>
<reference key="1">
    <citation type="journal article" date="2001" name="Proc. Natl. Acad. Sci. U.S.A.">
        <title>Genome sequence of an industrial microorganism Streptomyces avermitilis: deducing the ability of producing secondary metabolites.</title>
        <authorList>
            <person name="Omura S."/>
            <person name="Ikeda H."/>
            <person name="Ishikawa J."/>
            <person name="Hanamoto A."/>
            <person name="Takahashi C."/>
            <person name="Shinose M."/>
            <person name="Takahashi Y."/>
            <person name="Horikawa H."/>
            <person name="Nakazawa H."/>
            <person name="Osonoe T."/>
            <person name="Kikuchi H."/>
            <person name="Shiba T."/>
            <person name="Sakaki Y."/>
            <person name="Hattori M."/>
        </authorList>
    </citation>
    <scope>NUCLEOTIDE SEQUENCE [LARGE SCALE GENOMIC DNA]</scope>
    <source>
        <strain>ATCC 31267 / DSM 46492 / JCM 5070 / NBRC 14893 / NCIMB 12804 / NRRL 8165 / MA-4680</strain>
    </source>
</reference>
<reference key="2">
    <citation type="journal article" date="2003" name="Nat. Biotechnol.">
        <title>Complete genome sequence and comparative analysis of the industrial microorganism Streptomyces avermitilis.</title>
        <authorList>
            <person name="Ikeda H."/>
            <person name="Ishikawa J."/>
            <person name="Hanamoto A."/>
            <person name="Shinose M."/>
            <person name="Kikuchi H."/>
            <person name="Shiba T."/>
            <person name="Sakaki Y."/>
            <person name="Hattori M."/>
            <person name="Omura S."/>
        </authorList>
    </citation>
    <scope>NUCLEOTIDE SEQUENCE [LARGE SCALE GENOMIC DNA]</scope>
    <source>
        <strain>ATCC 31267 / DSM 46492 / JCM 5070 / NBRC 14893 / NCIMB 12804 / NRRL 8165 / MA-4680</strain>
    </source>
</reference>
<sequence>MAKKSKIAKNDRRQETVARYATRRAELTEIIRRPSTPEAERRAAQQELRRQPRDASATRVRNRDSVDGRPRGYHRAFGLSRVNLREQAHAGFLPGVRKSSW</sequence>
<dbReference type="EMBL" id="BA000030">
    <property type="protein sequence ID" value="BAC72353.1"/>
    <property type="molecule type" value="Genomic_DNA"/>
</dbReference>
<dbReference type="RefSeq" id="WP_010986065.1">
    <property type="nucleotide sequence ID" value="NZ_JZJK01000062.1"/>
</dbReference>
<dbReference type="SMR" id="Q82EH4"/>
<dbReference type="GeneID" id="41541722"/>
<dbReference type="KEGG" id="sma:SAVERM_4641"/>
<dbReference type="eggNOG" id="COG0199">
    <property type="taxonomic scope" value="Bacteria"/>
</dbReference>
<dbReference type="HOGENOM" id="CLU_139869_0_1_11"/>
<dbReference type="OrthoDB" id="9810484at2"/>
<dbReference type="Proteomes" id="UP000000428">
    <property type="component" value="Chromosome"/>
</dbReference>
<dbReference type="GO" id="GO:0015935">
    <property type="term" value="C:small ribosomal subunit"/>
    <property type="evidence" value="ECO:0007669"/>
    <property type="project" value="TreeGrafter"/>
</dbReference>
<dbReference type="GO" id="GO:0019843">
    <property type="term" value="F:rRNA binding"/>
    <property type="evidence" value="ECO:0007669"/>
    <property type="project" value="UniProtKB-UniRule"/>
</dbReference>
<dbReference type="GO" id="GO:0003735">
    <property type="term" value="F:structural constituent of ribosome"/>
    <property type="evidence" value="ECO:0007669"/>
    <property type="project" value="InterPro"/>
</dbReference>
<dbReference type="GO" id="GO:0006412">
    <property type="term" value="P:translation"/>
    <property type="evidence" value="ECO:0007669"/>
    <property type="project" value="UniProtKB-UniRule"/>
</dbReference>
<dbReference type="FunFam" id="1.10.287.1480:FF:000001">
    <property type="entry name" value="30S ribosomal protein S14"/>
    <property type="match status" value="1"/>
</dbReference>
<dbReference type="Gene3D" id="1.10.287.1480">
    <property type="match status" value="1"/>
</dbReference>
<dbReference type="HAMAP" id="MF_00537">
    <property type="entry name" value="Ribosomal_uS14_1"/>
    <property type="match status" value="1"/>
</dbReference>
<dbReference type="InterPro" id="IPR001209">
    <property type="entry name" value="Ribosomal_uS14"/>
</dbReference>
<dbReference type="InterPro" id="IPR023036">
    <property type="entry name" value="Ribosomal_uS14_bac/plastid"/>
</dbReference>
<dbReference type="NCBIfam" id="NF006477">
    <property type="entry name" value="PRK08881.1"/>
    <property type="match status" value="1"/>
</dbReference>
<dbReference type="PANTHER" id="PTHR19836">
    <property type="entry name" value="30S RIBOSOMAL PROTEIN S14"/>
    <property type="match status" value="1"/>
</dbReference>
<dbReference type="PANTHER" id="PTHR19836:SF23">
    <property type="entry name" value="SMALL RIBOSOMAL SUBUNIT PROTEIN US14A"/>
    <property type="match status" value="1"/>
</dbReference>
<dbReference type="Pfam" id="PF00253">
    <property type="entry name" value="Ribosomal_S14"/>
    <property type="match status" value="1"/>
</dbReference>
<dbReference type="SUPFAM" id="SSF57716">
    <property type="entry name" value="Glucocorticoid receptor-like (DNA-binding domain)"/>
    <property type="match status" value="1"/>
</dbReference>
<accession>Q82EH4</accession>